<sequence>MLLEAIFHEAKGSYAYPISETQLRVRLRAKKGDVVRCEVLYADRYASPEEELAHALAGKAGSDERFDYFEALLECSTKRVKYVFLLTGPQGEAVYFGETGFSAERSKAGVFQYAYIHRSEVFTTPEWAKEAVIYQIFPERFANGDPSNDPPGTEQWAKDARPRHDSFYGGDLKGVIDRLPYLEELGVTALYFTPIFASPSHHKYDTADYLAIDPQFGDLPTFRRLVDEAHRRGIKIILDAVFNHAGDQFFAFRDVLQKGEQSRYKDWFFIEDFPVSKTSRTNYETFAVQVPAMPKLRTENPEVKEYLFDVARFWMEQGIDGWRLDVANEVDHAFWREFRRLVKSLNPDALIVGEIWHDASGWLMGDQFDSVMNYLFRESVIRFFATGEIHAERFDAELTRARMLYPEQAAQGLWNLLDSHDTERFLTSCGGNEAKFRLAVLFQMTYLGTPLIYYGDEIGMAGATDPDCRRPMIWEEKEQNRGLFEFYKELIRLRHRLASLTRGNVRSWHADKQANLYAFVRTVQDQHVGVVLNNRGEKQTVLLQVPESGGKTWLDCLTGEEVHGKQGQLKLTLRPYQGMILWNGR</sequence>
<reference key="1">
    <citation type="journal article" date="1993" name="Biosci. Biotechnol. Biochem.">
        <title>A neopullulanase-type alpha-amylase gene from Thermoactinomyces vulgaris R-47.</title>
        <authorList>
            <person name="Tonozuka T."/>
            <person name="Ohtsuka M."/>
            <person name="Mogi S."/>
            <person name="Sakai H."/>
            <person name="Ohta T."/>
            <person name="Sakano Y."/>
        </authorList>
    </citation>
    <scope>NUCLEOTIDE SEQUENCE [GENOMIC DNA]</scope>
    <scope>CHARACTERIZATION</scope>
    <scope>FUNCTION</scope>
    <scope>CATALYTIC ACTIVITY</scope>
    <source>
        <strain>R-47</strain>
    </source>
</reference>
<reference key="2">
    <citation type="journal article" date="1999" name="J. Mol. Biol.">
        <title>Crystal structure of Thermoactinomyces vulgaris R-47 alpha-amylase II (TVAII) hydrolyzing cyclodextrins and pullulan at 2.6-A resolution.</title>
        <authorList>
            <person name="Kamitori S."/>
            <person name="Kondo S."/>
            <person name="Okuyama K."/>
            <person name="Yokota T."/>
            <person name="Shimura Y."/>
            <person name="Tonozuka T."/>
            <person name="Sakano Y."/>
        </authorList>
    </citation>
    <scope>X-RAY CRYSTALLOGRAPHY (2.6 ANGSTROMS)</scope>
    <source>
        <strain>R-47</strain>
    </source>
</reference>
<reference key="3">
    <citation type="journal article" date="2002" name="J. Mol. Biol.">
        <title>Crystal structures and structural comparison of Thermoactinomyces vulgaris R-47 alpha-amylase 1 (TVAI) at 1.6 A resolution and alpha-amylase 2 (TVAII) at 2.3 A resolution.</title>
        <authorList>
            <person name="Kamitori S."/>
            <person name="Abe A."/>
            <person name="Ohtaki A."/>
            <person name="Kaji A."/>
            <person name="Tonozuka T."/>
            <person name="Sakano Y."/>
        </authorList>
    </citation>
    <scope>X-RAY CRYSTALLOGRAPHY (2.30 ANGSTROMS) IN COMPLEX WITH CALCIUM</scope>
    <scope>COFACTOR</scope>
</reference>
<gene>
    <name type="primary">tvaII</name>
</gene>
<dbReference type="EC" id="3.2.1.135" evidence="4"/>
<dbReference type="EMBL" id="D13178">
    <property type="protein sequence ID" value="BAA02473.1"/>
    <property type="molecule type" value="Genomic_DNA"/>
</dbReference>
<dbReference type="PIR" id="JC1486">
    <property type="entry name" value="JC1486"/>
</dbReference>
<dbReference type="PDB" id="1BVZ">
    <property type="method" value="X-ray"/>
    <property type="resolution" value="2.60 A"/>
    <property type="chains" value="A/B=1-585"/>
</dbReference>
<dbReference type="PDB" id="1G1Y">
    <property type="method" value="X-ray"/>
    <property type="resolution" value="3.00 A"/>
    <property type="chains" value="A/B=1-585"/>
</dbReference>
<dbReference type="PDB" id="1JF5">
    <property type="method" value="X-ray"/>
    <property type="resolution" value="3.20 A"/>
    <property type="chains" value="A/B=1-585"/>
</dbReference>
<dbReference type="PDB" id="1JF6">
    <property type="method" value="X-ray"/>
    <property type="resolution" value="3.20 A"/>
    <property type="chains" value="A/B=1-585"/>
</dbReference>
<dbReference type="PDB" id="1JI2">
    <property type="method" value="X-ray"/>
    <property type="resolution" value="2.30 A"/>
    <property type="chains" value="A/B=1-585"/>
</dbReference>
<dbReference type="PDB" id="1JIB">
    <property type="method" value="X-ray"/>
    <property type="resolution" value="3.30 A"/>
    <property type="chains" value="A/B=1-585"/>
</dbReference>
<dbReference type="PDB" id="1JL8">
    <property type="method" value="X-ray"/>
    <property type="resolution" value="3.20 A"/>
    <property type="chains" value="A/B=1-585"/>
</dbReference>
<dbReference type="PDB" id="1VB9">
    <property type="method" value="X-ray"/>
    <property type="resolution" value="2.20 A"/>
    <property type="chains" value="A/B=1-585"/>
</dbReference>
<dbReference type="PDB" id="1VFM">
    <property type="method" value="X-ray"/>
    <property type="resolution" value="2.90 A"/>
    <property type="chains" value="A/B=1-585"/>
</dbReference>
<dbReference type="PDB" id="1VFO">
    <property type="method" value="X-ray"/>
    <property type="resolution" value="2.81 A"/>
    <property type="chains" value="A/B=1-585"/>
</dbReference>
<dbReference type="PDB" id="1VFU">
    <property type="method" value="X-ray"/>
    <property type="resolution" value="3.10 A"/>
    <property type="chains" value="A/B=1-585"/>
</dbReference>
<dbReference type="PDB" id="1WZK">
    <property type="method" value="X-ray"/>
    <property type="resolution" value="2.30 A"/>
    <property type="chains" value="A/B=1-585"/>
</dbReference>
<dbReference type="PDB" id="1WZL">
    <property type="method" value="X-ray"/>
    <property type="resolution" value="2.00 A"/>
    <property type="chains" value="A/B=1-585"/>
</dbReference>
<dbReference type="PDB" id="1WZM">
    <property type="method" value="X-ray"/>
    <property type="resolution" value="3.20 A"/>
    <property type="chains" value="A/B=1-585"/>
</dbReference>
<dbReference type="PDB" id="2D2O">
    <property type="method" value="X-ray"/>
    <property type="resolution" value="2.10 A"/>
    <property type="chains" value="A/B=1-585"/>
</dbReference>
<dbReference type="PDB" id="3A6O">
    <property type="method" value="X-ray"/>
    <property type="resolution" value="2.80 A"/>
    <property type="chains" value="A/B=1-585"/>
</dbReference>
<dbReference type="PDBsum" id="1BVZ"/>
<dbReference type="PDBsum" id="1G1Y"/>
<dbReference type="PDBsum" id="1JF5"/>
<dbReference type="PDBsum" id="1JF6"/>
<dbReference type="PDBsum" id="1JI2"/>
<dbReference type="PDBsum" id="1JIB"/>
<dbReference type="PDBsum" id="1JL8"/>
<dbReference type="PDBsum" id="1VB9"/>
<dbReference type="PDBsum" id="1VFM"/>
<dbReference type="PDBsum" id="1VFO"/>
<dbReference type="PDBsum" id="1VFU"/>
<dbReference type="PDBsum" id="1WZK"/>
<dbReference type="PDBsum" id="1WZL"/>
<dbReference type="PDBsum" id="1WZM"/>
<dbReference type="PDBsum" id="2D2O"/>
<dbReference type="PDBsum" id="3A6O"/>
<dbReference type="SMR" id="Q08751"/>
<dbReference type="DrugBank" id="DB02379">
    <property type="generic name" value="Beta-D-Glucose"/>
</dbReference>
<dbReference type="DrugBank" id="DB03995">
    <property type="generic name" value="Betadex"/>
</dbReference>
<dbReference type="DrugBank" id="DB02237">
    <property type="generic name" value="Maltotetraose"/>
</dbReference>
<dbReference type="CAZy" id="CBM34">
    <property type="family name" value="Carbohydrate-Binding Module Family 34"/>
</dbReference>
<dbReference type="CAZy" id="GH13">
    <property type="family name" value="Glycoside Hydrolase Family 13"/>
</dbReference>
<dbReference type="EvolutionaryTrace" id="Q08751"/>
<dbReference type="GO" id="GO:0046872">
    <property type="term" value="F:metal ion binding"/>
    <property type="evidence" value="ECO:0007669"/>
    <property type="project" value="UniProtKB-KW"/>
</dbReference>
<dbReference type="GO" id="GO:0031216">
    <property type="term" value="F:neopullulanase activity"/>
    <property type="evidence" value="ECO:0007669"/>
    <property type="project" value="UniProtKB-EC"/>
</dbReference>
<dbReference type="GO" id="GO:0005975">
    <property type="term" value="P:carbohydrate metabolic process"/>
    <property type="evidence" value="ECO:0007669"/>
    <property type="project" value="InterPro"/>
</dbReference>
<dbReference type="CDD" id="cd11338">
    <property type="entry name" value="AmyAc_CMD"/>
    <property type="match status" value="1"/>
</dbReference>
<dbReference type="CDD" id="cd02857">
    <property type="entry name" value="E_set_CDase_PDE_N"/>
    <property type="match status" value="1"/>
</dbReference>
<dbReference type="Gene3D" id="3.20.20.80">
    <property type="entry name" value="Glycosidases"/>
    <property type="match status" value="1"/>
</dbReference>
<dbReference type="Gene3D" id="2.60.40.1180">
    <property type="entry name" value="Golgi alpha-mannosidase II"/>
    <property type="match status" value="1"/>
</dbReference>
<dbReference type="Gene3D" id="2.60.40.10">
    <property type="entry name" value="Immunoglobulins"/>
    <property type="match status" value="1"/>
</dbReference>
<dbReference type="Gene3D" id="3.90.400.10">
    <property type="entry name" value="Oligo-1,6-glucosidase, Domain 2"/>
    <property type="match status" value="1"/>
</dbReference>
<dbReference type="InterPro" id="IPR006047">
    <property type="entry name" value="Glyco_hydro_13_cat_dom"/>
</dbReference>
<dbReference type="InterPro" id="IPR004185">
    <property type="entry name" value="Glyco_hydro_13_lg-like_dom"/>
</dbReference>
<dbReference type="InterPro" id="IPR013780">
    <property type="entry name" value="Glyco_hydro_b"/>
</dbReference>
<dbReference type="InterPro" id="IPR017853">
    <property type="entry name" value="Glycoside_hydrolase_SF"/>
</dbReference>
<dbReference type="InterPro" id="IPR013783">
    <property type="entry name" value="Ig-like_fold"/>
</dbReference>
<dbReference type="InterPro" id="IPR014756">
    <property type="entry name" value="Ig_E-set"/>
</dbReference>
<dbReference type="InterPro" id="IPR032091">
    <property type="entry name" value="Malt_amylase-like_C"/>
</dbReference>
<dbReference type="InterPro" id="IPR045857">
    <property type="entry name" value="O16G_dom_2"/>
</dbReference>
<dbReference type="PANTHER" id="PTHR10357">
    <property type="entry name" value="ALPHA-AMYLASE FAMILY MEMBER"/>
    <property type="match status" value="1"/>
</dbReference>
<dbReference type="PANTHER" id="PTHR10357:SF210">
    <property type="entry name" value="MALTODEXTRIN GLUCOSIDASE"/>
    <property type="match status" value="1"/>
</dbReference>
<dbReference type="Pfam" id="PF00128">
    <property type="entry name" value="Alpha-amylase"/>
    <property type="match status" value="1"/>
</dbReference>
<dbReference type="Pfam" id="PF02903">
    <property type="entry name" value="Alpha-amylase_N"/>
    <property type="match status" value="1"/>
</dbReference>
<dbReference type="Pfam" id="PF16657">
    <property type="entry name" value="Malt_amylase_C"/>
    <property type="match status" value="1"/>
</dbReference>
<dbReference type="SMART" id="SM00642">
    <property type="entry name" value="Aamy"/>
    <property type="match status" value="1"/>
</dbReference>
<dbReference type="SUPFAM" id="SSF51445">
    <property type="entry name" value="(Trans)glycosidases"/>
    <property type="match status" value="1"/>
</dbReference>
<dbReference type="SUPFAM" id="SSF81296">
    <property type="entry name" value="E set domains"/>
    <property type="match status" value="1"/>
</dbReference>
<dbReference type="SUPFAM" id="SSF51011">
    <property type="entry name" value="Glycosyl hydrolase domain"/>
    <property type="match status" value="1"/>
</dbReference>
<comment type="function">
    <text evidence="4">Hydrolyzes pullulan efficiently but only a small amount of starch. Endohydrolysis of 1,4-alpha-glucosidic linkages in pullulan to form panose. Also cleaves (1-6)-alpha-glucosidic linkages to form maltotriose.</text>
</comment>
<comment type="catalytic activity">
    <reaction evidence="4">
        <text>Hydrolysis of pullulan to panose (6-alpha-D-glucosylmaltose).</text>
        <dbReference type="EC" id="3.2.1.135"/>
    </reaction>
</comment>
<comment type="cofactor">
    <cofactor evidence="3">
        <name>Ca(2+)</name>
        <dbReference type="ChEBI" id="CHEBI:29108"/>
    </cofactor>
    <text evidence="3">Binds 1 Ca(2+) ion per subunit.</text>
</comment>
<comment type="subunit">
    <text>Monomer.</text>
</comment>
<comment type="similarity">
    <text evidence="5">Belongs to the glycosyl hydrolase 13 family.</text>
</comment>
<name>NEPU2_THEVU</name>
<organism>
    <name type="scientific">Thermoactinomyces vulgaris</name>
    <dbReference type="NCBI Taxonomy" id="2026"/>
    <lineage>
        <taxon>Bacteria</taxon>
        <taxon>Bacillati</taxon>
        <taxon>Bacillota</taxon>
        <taxon>Bacilli</taxon>
        <taxon>Bacillales</taxon>
        <taxon>Thermoactinomycetaceae</taxon>
        <taxon>Thermoactinomyces</taxon>
    </lineage>
</organism>
<protein>
    <recommendedName>
        <fullName>Neopullulanase 2</fullName>
        <ecNumber evidence="4">3.2.1.135</ecNumber>
    </recommendedName>
    <alternativeName>
        <fullName>Alpha-amylase II</fullName>
    </alternativeName>
    <alternativeName>
        <fullName>TVA II</fullName>
    </alternativeName>
</protein>
<keyword id="KW-0002">3D-structure</keyword>
<keyword id="KW-0106">Calcium</keyword>
<keyword id="KW-0119">Carbohydrate metabolism</keyword>
<keyword id="KW-0326">Glycosidase</keyword>
<keyword id="KW-0378">Hydrolase</keyword>
<keyword id="KW-0479">Metal-binding</keyword>
<evidence type="ECO:0000250" key="1"/>
<evidence type="ECO:0000250" key="2">
    <source>
        <dbReference type="UniProtKB" id="P38940"/>
    </source>
</evidence>
<evidence type="ECO:0000269" key="3">
    <source>
    </source>
</evidence>
<evidence type="ECO:0000269" key="4">
    <source>
    </source>
</evidence>
<evidence type="ECO:0000305" key="5"/>
<evidence type="ECO:0007744" key="6">
    <source>
        <dbReference type="PDB" id="1JI2"/>
    </source>
</evidence>
<evidence type="ECO:0007829" key="7">
    <source>
        <dbReference type="PDB" id="1BVZ"/>
    </source>
</evidence>
<evidence type="ECO:0007829" key="8">
    <source>
        <dbReference type="PDB" id="1VFU"/>
    </source>
</evidence>
<evidence type="ECO:0007829" key="9">
    <source>
        <dbReference type="PDB" id="1WZL"/>
    </source>
</evidence>
<accession>Q08751</accession>
<proteinExistence type="evidence at protein level"/>
<feature type="chain" id="PRO_0000054311" description="Neopullulanase 2">
    <location>
        <begin position="1"/>
        <end position="585"/>
    </location>
</feature>
<feature type="active site" description="Nucleophile" evidence="2">
    <location>
        <position position="325"/>
    </location>
</feature>
<feature type="active site" description="Proton donor" evidence="2">
    <location>
        <position position="354"/>
    </location>
</feature>
<feature type="binding site" evidence="3 6">
    <location>
        <position position="143"/>
    </location>
    <ligand>
        <name>Ca(2+)</name>
        <dbReference type="ChEBI" id="CHEBI:29108"/>
    </ligand>
</feature>
<feature type="binding site" evidence="3 6">
    <location>
        <position position="145"/>
    </location>
    <ligand>
        <name>Ca(2+)</name>
        <dbReference type="ChEBI" id="CHEBI:29108"/>
    </ligand>
</feature>
<feature type="binding site" evidence="3 6">
    <location>
        <position position="148"/>
    </location>
    <ligand>
        <name>Ca(2+)</name>
        <dbReference type="ChEBI" id="CHEBI:29108"/>
    </ligand>
</feature>
<feature type="binding site" evidence="3 6">
    <location>
        <position position="149"/>
    </location>
    <ligand>
        <name>Ca(2+)</name>
        <dbReference type="ChEBI" id="CHEBI:29108"/>
    </ligand>
</feature>
<feature type="binding site" evidence="3 6">
    <location>
        <position position="169"/>
    </location>
    <ligand>
        <name>Ca(2+)</name>
        <dbReference type="ChEBI" id="CHEBI:29108"/>
    </ligand>
</feature>
<feature type="binding site" evidence="3 6">
    <location>
        <position position="171"/>
    </location>
    <ligand>
        <name>Ca(2+)</name>
        <dbReference type="ChEBI" id="CHEBI:29108"/>
    </ligand>
</feature>
<feature type="binding site" evidence="2">
    <location>
        <position position="244"/>
    </location>
    <ligand>
        <name>substrate</name>
    </ligand>
</feature>
<feature type="binding site" evidence="2">
    <location>
        <position position="323"/>
    </location>
    <ligand>
        <name>substrate</name>
    </ligand>
</feature>
<feature type="binding site" evidence="2">
    <location>
        <begin position="420"/>
        <end position="421"/>
    </location>
    <ligand>
        <name>substrate</name>
    </ligand>
</feature>
<feature type="binding site" evidence="2">
    <location>
        <position position="465"/>
    </location>
    <ligand>
        <name>substrate</name>
    </ligand>
</feature>
<feature type="binding site" evidence="2">
    <location>
        <position position="469"/>
    </location>
    <ligand>
        <name>substrate</name>
    </ligand>
</feature>
<feature type="site" description="Transition state stabilizer" evidence="1">
    <location>
        <position position="421"/>
    </location>
</feature>
<feature type="helix" evidence="9">
    <location>
        <begin position="3"/>
        <end position="5"/>
    </location>
</feature>
<feature type="turn" evidence="9">
    <location>
        <begin position="12"/>
        <end position="14"/>
    </location>
</feature>
<feature type="strand" evidence="9">
    <location>
        <begin position="15"/>
        <end position="19"/>
    </location>
</feature>
<feature type="strand" evidence="9">
    <location>
        <begin position="22"/>
        <end position="30"/>
    </location>
</feature>
<feature type="turn" evidence="9">
    <location>
        <begin position="31"/>
        <end position="33"/>
    </location>
</feature>
<feature type="strand" evidence="9">
    <location>
        <begin position="35"/>
        <end position="42"/>
    </location>
</feature>
<feature type="strand" evidence="8">
    <location>
        <begin position="48"/>
        <end position="50"/>
    </location>
</feature>
<feature type="strand" evidence="9">
    <location>
        <begin position="53"/>
        <end position="56"/>
    </location>
</feature>
<feature type="strand" evidence="9">
    <location>
        <begin position="58"/>
        <end position="62"/>
    </location>
</feature>
<feature type="strand" evidence="9">
    <location>
        <begin position="64"/>
        <end position="74"/>
    </location>
</feature>
<feature type="strand" evidence="8">
    <location>
        <begin position="76"/>
        <end position="78"/>
    </location>
</feature>
<feature type="strand" evidence="9">
    <location>
        <begin position="80"/>
        <end position="87"/>
    </location>
</feature>
<feature type="strand" evidence="7">
    <location>
        <begin position="89"/>
        <end position="91"/>
    </location>
</feature>
<feature type="strand" evidence="9">
    <location>
        <begin position="93"/>
        <end position="97"/>
    </location>
</feature>
<feature type="strand" evidence="9">
    <location>
        <begin position="100"/>
        <end position="104"/>
    </location>
</feature>
<feature type="helix" evidence="9">
    <location>
        <begin position="105"/>
        <end position="108"/>
    </location>
</feature>
<feature type="strand" evidence="9">
    <location>
        <begin position="111"/>
        <end position="113"/>
    </location>
</feature>
<feature type="helix" evidence="9">
    <location>
        <begin position="118"/>
        <end position="120"/>
    </location>
</feature>
<feature type="helix" evidence="9">
    <location>
        <begin position="127"/>
        <end position="130"/>
    </location>
</feature>
<feature type="strand" evidence="9">
    <location>
        <begin position="133"/>
        <end position="136"/>
    </location>
</feature>
<feature type="helix" evidence="9">
    <location>
        <begin position="138"/>
        <end position="140"/>
    </location>
</feature>
<feature type="helix" evidence="9">
    <location>
        <begin position="146"/>
        <end position="148"/>
    </location>
</feature>
<feature type="helix" evidence="9">
    <location>
        <begin position="172"/>
        <end position="177"/>
    </location>
</feature>
<feature type="helix" evidence="9">
    <location>
        <begin position="179"/>
        <end position="185"/>
    </location>
</feature>
<feature type="strand" evidence="9">
    <location>
        <begin position="189"/>
        <end position="192"/>
    </location>
</feature>
<feature type="strand" evidence="9">
    <location>
        <begin position="199"/>
        <end position="202"/>
    </location>
</feature>
<feature type="strand" evidence="9">
    <location>
        <begin position="207"/>
        <end position="212"/>
    </location>
</feature>
<feature type="turn" evidence="9">
    <location>
        <begin position="214"/>
        <end position="216"/>
    </location>
</feature>
<feature type="helix" evidence="9">
    <location>
        <begin position="219"/>
        <end position="230"/>
    </location>
</feature>
<feature type="turn" evidence="9">
    <location>
        <begin position="231"/>
        <end position="233"/>
    </location>
</feature>
<feature type="strand" evidence="9">
    <location>
        <begin position="235"/>
        <end position="240"/>
    </location>
</feature>
<feature type="helix" evidence="9">
    <location>
        <begin position="250"/>
        <end position="258"/>
    </location>
</feature>
<feature type="helix" evidence="9">
    <location>
        <begin position="259"/>
        <end position="261"/>
    </location>
</feature>
<feature type="helix" evidence="9">
    <location>
        <begin position="265"/>
        <end position="267"/>
    </location>
</feature>
<feature type="strand" evidence="9">
    <location>
        <begin position="270"/>
        <end position="274"/>
    </location>
</feature>
<feature type="strand" evidence="7">
    <location>
        <begin position="278"/>
        <end position="280"/>
    </location>
</feature>
<feature type="strand" evidence="9">
    <location>
        <begin position="285"/>
        <end position="289"/>
    </location>
</feature>
<feature type="strand" evidence="9">
    <location>
        <begin position="294"/>
        <end position="296"/>
    </location>
</feature>
<feature type="helix" evidence="9">
    <location>
        <begin position="301"/>
        <end position="316"/>
    </location>
</feature>
<feature type="strand" evidence="9">
    <location>
        <begin position="321"/>
        <end position="324"/>
    </location>
</feature>
<feature type="helix" evidence="9">
    <location>
        <begin position="327"/>
        <end position="329"/>
    </location>
</feature>
<feature type="helix" evidence="9">
    <location>
        <begin position="332"/>
        <end position="345"/>
    </location>
</feature>
<feature type="strand" evidence="9">
    <location>
        <begin position="350"/>
        <end position="353"/>
    </location>
</feature>
<feature type="helix" evidence="9">
    <location>
        <begin position="360"/>
        <end position="362"/>
    </location>
</feature>
<feature type="strand" evidence="9">
    <location>
        <begin position="364"/>
        <end position="367"/>
    </location>
</feature>
<feature type="strand" evidence="9">
    <location>
        <begin position="369"/>
        <end position="372"/>
    </location>
</feature>
<feature type="helix" evidence="9">
    <location>
        <begin position="374"/>
        <end position="384"/>
    </location>
</feature>
<feature type="helix" evidence="9">
    <location>
        <begin position="391"/>
        <end position="402"/>
    </location>
</feature>
<feature type="helix" evidence="9">
    <location>
        <begin position="407"/>
        <end position="410"/>
    </location>
</feature>
<feature type="strand" evidence="9">
    <location>
        <begin position="414"/>
        <end position="417"/>
    </location>
</feature>
<feature type="helix" evidence="9">
    <location>
        <begin position="425"/>
        <end position="428"/>
    </location>
</feature>
<feature type="turn" evidence="9">
    <location>
        <begin position="429"/>
        <end position="431"/>
    </location>
</feature>
<feature type="helix" evidence="9">
    <location>
        <begin position="433"/>
        <end position="445"/>
    </location>
</feature>
<feature type="strand" evidence="9">
    <location>
        <begin position="446"/>
        <end position="453"/>
    </location>
</feature>
<feature type="helix" evidence="9">
    <location>
        <begin position="456"/>
        <end position="458"/>
    </location>
</feature>
<feature type="helix" evidence="9">
    <location>
        <begin position="467"/>
        <end position="469"/>
    </location>
</feature>
<feature type="helix" evidence="9">
    <location>
        <begin position="476"/>
        <end position="478"/>
    </location>
</feature>
<feature type="helix" evidence="9">
    <location>
        <begin position="481"/>
        <end position="496"/>
    </location>
</feature>
<feature type="helix" evidence="9">
    <location>
        <begin position="498"/>
        <end position="502"/>
    </location>
</feature>
<feature type="strand" evidence="9">
    <location>
        <begin position="504"/>
        <end position="511"/>
    </location>
</feature>
<feature type="turn" evidence="9">
    <location>
        <begin position="512"/>
        <end position="515"/>
    </location>
</feature>
<feature type="strand" evidence="9">
    <location>
        <begin position="516"/>
        <end position="523"/>
    </location>
</feature>
<feature type="strand" evidence="9">
    <location>
        <begin position="526"/>
        <end position="533"/>
    </location>
</feature>
<feature type="strand" evidence="9">
    <location>
        <begin position="535"/>
        <end position="537"/>
    </location>
</feature>
<feature type="strand" evidence="9">
    <location>
        <begin position="539"/>
        <end position="544"/>
    </location>
</feature>
<feature type="helix" evidence="9">
    <location>
        <begin position="547"/>
        <end position="549"/>
    </location>
</feature>
<feature type="strand" evidence="9">
    <location>
        <begin position="551"/>
        <end position="555"/>
    </location>
</feature>
<feature type="turn" evidence="9">
    <location>
        <begin position="556"/>
        <end position="558"/>
    </location>
</feature>
<feature type="strand" evidence="9">
    <location>
        <begin position="561"/>
        <end position="563"/>
    </location>
</feature>
<feature type="strand" evidence="9">
    <location>
        <begin position="568"/>
        <end position="573"/>
    </location>
</feature>
<feature type="strand" evidence="9">
    <location>
        <begin position="578"/>
        <end position="582"/>
    </location>
</feature>